<keyword id="KW-0963">Cytoplasm</keyword>
<keyword id="KW-0448">Lipopolysaccharide biosynthesis</keyword>
<keyword id="KW-0548">Nucleotidyltransferase</keyword>
<keyword id="KW-0808">Transferase</keyword>
<sequence length="250" mass="27119">MNREQAGKALVLIPARMASTRLPGKPLADICGLPMIVQVARRAAEAEVGRIVVAVDHPEVFAAVSDAGFEAIMTRVDHQSGSDRIHEALLKADPQGEAEIVINVQGDLPTIEPGPIRAALKPLENPSTDIATLTVAITDEHEKTNPNVVKVVGSPLSQSRFRALYFTRATAPYGEGPLYHHIGLYAYRRRALETFVSLKPSALEKRESLEQLRALEAGMRIDVEIVDSVPLGVDTPADLDKARRILSARA</sequence>
<proteinExistence type="inferred from homology"/>
<dbReference type="EC" id="2.7.7.38" evidence="1"/>
<dbReference type="EMBL" id="CP000738">
    <property type="protein sequence ID" value="ABR62245.1"/>
    <property type="molecule type" value="Genomic_DNA"/>
</dbReference>
<dbReference type="RefSeq" id="WP_012067626.1">
    <property type="nucleotide sequence ID" value="NC_009636.1"/>
</dbReference>
<dbReference type="RefSeq" id="YP_001329080.1">
    <property type="nucleotide sequence ID" value="NC_009636.1"/>
</dbReference>
<dbReference type="SMR" id="A6UF15"/>
<dbReference type="STRING" id="366394.Smed_3427"/>
<dbReference type="KEGG" id="smd:Smed_3427"/>
<dbReference type="PATRIC" id="fig|366394.8.peg.6676"/>
<dbReference type="eggNOG" id="COG1212">
    <property type="taxonomic scope" value="Bacteria"/>
</dbReference>
<dbReference type="HOGENOM" id="CLU_065038_0_1_5"/>
<dbReference type="OrthoDB" id="9815559at2"/>
<dbReference type="UniPathway" id="UPA00030"/>
<dbReference type="UniPathway" id="UPA00358">
    <property type="reaction ID" value="UER00476"/>
</dbReference>
<dbReference type="Proteomes" id="UP000001108">
    <property type="component" value="Chromosome"/>
</dbReference>
<dbReference type="GO" id="GO:0005829">
    <property type="term" value="C:cytosol"/>
    <property type="evidence" value="ECO:0007669"/>
    <property type="project" value="TreeGrafter"/>
</dbReference>
<dbReference type="GO" id="GO:0008690">
    <property type="term" value="F:3-deoxy-manno-octulosonate cytidylyltransferase activity"/>
    <property type="evidence" value="ECO:0007669"/>
    <property type="project" value="UniProtKB-UniRule"/>
</dbReference>
<dbReference type="GO" id="GO:0033468">
    <property type="term" value="P:CMP-keto-3-deoxy-D-manno-octulosonic acid biosynthetic process"/>
    <property type="evidence" value="ECO:0007669"/>
    <property type="project" value="UniProtKB-UniRule"/>
</dbReference>
<dbReference type="GO" id="GO:0009103">
    <property type="term" value="P:lipopolysaccharide biosynthetic process"/>
    <property type="evidence" value="ECO:0007669"/>
    <property type="project" value="UniProtKB-UniRule"/>
</dbReference>
<dbReference type="CDD" id="cd02517">
    <property type="entry name" value="CMP-KDO-Synthetase"/>
    <property type="match status" value="1"/>
</dbReference>
<dbReference type="Gene3D" id="3.90.550.10">
    <property type="entry name" value="Spore Coat Polysaccharide Biosynthesis Protein SpsA, Chain A"/>
    <property type="match status" value="1"/>
</dbReference>
<dbReference type="HAMAP" id="MF_00057">
    <property type="entry name" value="KdsB"/>
    <property type="match status" value="1"/>
</dbReference>
<dbReference type="InterPro" id="IPR003329">
    <property type="entry name" value="Cytidylyl_trans"/>
</dbReference>
<dbReference type="InterPro" id="IPR004528">
    <property type="entry name" value="KdsB"/>
</dbReference>
<dbReference type="InterPro" id="IPR029044">
    <property type="entry name" value="Nucleotide-diphossugar_trans"/>
</dbReference>
<dbReference type="NCBIfam" id="TIGR00466">
    <property type="entry name" value="kdsB"/>
    <property type="match status" value="1"/>
</dbReference>
<dbReference type="NCBIfam" id="NF003948">
    <property type="entry name" value="PRK05450.1-1"/>
    <property type="match status" value="1"/>
</dbReference>
<dbReference type="NCBIfam" id="NF003952">
    <property type="entry name" value="PRK05450.1-5"/>
    <property type="match status" value="1"/>
</dbReference>
<dbReference type="PANTHER" id="PTHR42866">
    <property type="entry name" value="3-DEOXY-MANNO-OCTULOSONATE CYTIDYLYLTRANSFERASE"/>
    <property type="match status" value="1"/>
</dbReference>
<dbReference type="PANTHER" id="PTHR42866:SF2">
    <property type="entry name" value="3-DEOXY-MANNO-OCTULOSONATE CYTIDYLYLTRANSFERASE, MITOCHONDRIAL"/>
    <property type="match status" value="1"/>
</dbReference>
<dbReference type="Pfam" id="PF02348">
    <property type="entry name" value="CTP_transf_3"/>
    <property type="match status" value="1"/>
</dbReference>
<dbReference type="SUPFAM" id="SSF53448">
    <property type="entry name" value="Nucleotide-diphospho-sugar transferases"/>
    <property type="match status" value="1"/>
</dbReference>
<comment type="function">
    <text evidence="1">Activates KDO (a required 8-carbon sugar) for incorporation into bacterial lipopolysaccharide in Gram-negative bacteria.</text>
</comment>
<comment type="catalytic activity">
    <reaction evidence="1">
        <text>3-deoxy-alpha-D-manno-oct-2-ulosonate + CTP = CMP-3-deoxy-beta-D-manno-octulosonate + diphosphate</text>
        <dbReference type="Rhea" id="RHEA:23448"/>
        <dbReference type="ChEBI" id="CHEBI:33019"/>
        <dbReference type="ChEBI" id="CHEBI:37563"/>
        <dbReference type="ChEBI" id="CHEBI:85986"/>
        <dbReference type="ChEBI" id="CHEBI:85987"/>
        <dbReference type="EC" id="2.7.7.38"/>
    </reaction>
</comment>
<comment type="pathway">
    <text evidence="1">Nucleotide-sugar biosynthesis; CMP-3-deoxy-D-manno-octulosonate biosynthesis; CMP-3-deoxy-D-manno-octulosonate from 3-deoxy-D-manno-octulosonate and CTP: step 1/1.</text>
</comment>
<comment type="pathway">
    <text evidence="1">Bacterial outer membrane biogenesis; lipopolysaccharide biosynthesis.</text>
</comment>
<comment type="subcellular location">
    <subcellularLocation>
        <location evidence="1">Cytoplasm</location>
    </subcellularLocation>
</comment>
<comment type="similarity">
    <text evidence="1">Belongs to the KdsB family.</text>
</comment>
<reference key="1">
    <citation type="submission" date="2007-06" db="EMBL/GenBank/DDBJ databases">
        <title>Complete sequence of Sinorhizobium medicae WSM419 chromosome.</title>
        <authorList>
            <consortium name="US DOE Joint Genome Institute"/>
            <person name="Copeland A."/>
            <person name="Lucas S."/>
            <person name="Lapidus A."/>
            <person name="Barry K."/>
            <person name="Glavina del Rio T."/>
            <person name="Dalin E."/>
            <person name="Tice H."/>
            <person name="Pitluck S."/>
            <person name="Chain P."/>
            <person name="Malfatti S."/>
            <person name="Shin M."/>
            <person name="Vergez L."/>
            <person name="Schmutz J."/>
            <person name="Larimer F."/>
            <person name="Land M."/>
            <person name="Hauser L."/>
            <person name="Kyrpides N."/>
            <person name="Mikhailova N."/>
            <person name="Reeve W.G."/>
            <person name="Richardson P."/>
        </authorList>
    </citation>
    <scope>NUCLEOTIDE SEQUENCE [LARGE SCALE GENOMIC DNA]</scope>
    <source>
        <strain>WSM419</strain>
    </source>
</reference>
<evidence type="ECO:0000255" key="1">
    <source>
        <dbReference type="HAMAP-Rule" id="MF_00057"/>
    </source>
</evidence>
<feature type="chain" id="PRO_0000370162" description="3-deoxy-manno-octulosonate cytidylyltransferase">
    <location>
        <begin position="1"/>
        <end position="250"/>
    </location>
</feature>
<accession>A6UF15</accession>
<organism>
    <name type="scientific">Sinorhizobium medicae (strain WSM419)</name>
    <name type="common">Ensifer medicae</name>
    <dbReference type="NCBI Taxonomy" id="366394"/>
    <lineage>
        <taxon>Bacteria</taxon>
        <taxon>Pseudomonadati</taxon>
        <taxon>Pseudomonadota</taxon>
        <taxon>Alphaproteobacteria</taxon>
        <taxon>Hyphomicrobiales</taxon>
        <taxon>Rhizobiaceae</taxon>
        <taxon>Sinorhizobium/Ensifer group</taxon>
        <taxon>Sinorhizobium</taxon>
    </lineage>
</organism>
<gene>
    <name evidence="1" type="primary">kdsB</name>
    <name type="ordered locus">Smed_3427</name>
</gene>
<protein>
    <recommendedName>
        <fullName evidence="1">3-deoxy-manno-octulosonate cytidylyltransferase</fullName>
        <ecNumber evidence="1">2.7.7.38</ecNumber>
    </recommendedName>
    <alternativeName>
        <fullName evidence="1">CMP-2-keto-3-deoxyoctulosonic acid synthase</fullName>
        <shortName evidence="1">CKS</shortName>
        <shortName evidence="1">CMP-KDO synthase</shortName>
    </alternativeName>
</protein>
<name>KDSB_SINMW</name>